<name>TRHO_BARHE</name>
<proteinExistence type="inferred from homology"/>
<comment type="function">
    <text evidence="1">Catalyzes oxygen-dependent 5-hydroxyuridine (ho5U) modification at position 34 in tRNAs.</text>
</comment>
<comment type="catalytic activity">
    <reaction evidence="1">
        <text>uridine(34) in tRNA + AH2 + O2 = 5-hydroxyuridine(34) in tRNA + A + H2O</text>
        <dbReference type="Rhea" id="RHEA:64224"/>
        <dbReference type="Rhea" id="RHEA-COMP:11727"/>
        <dbReference type="Rhea" id="RHEA-COMP:13381"/>
        <dbReference type="ChEBI" id="CHEBI:13193"/>
        <dbReference type="ChEBI" id="CHEBI:15377"/>
        <dbReference type="ChEBI" id="CHEBI:15379"/>
        <dbReference type="ChEBI" id="CHEBI:17499"/>
        <dbReference type="ChEBI" id="CHEBI:65315"/>
        <dbReference type="ChEBI" id="CHEBI:136877"/>
    </reaction>
</comment>
<comment type="similarity">
    <text evidence="1">Belongs to the TrhO family.</text>
</comment>
<accession>Q6G5N5</accession>
<sequence length="304" mass="35047">MEKNFKVAALYCFADLKHYRQLQKPLLDLCQAKDIKGTLLLAQEGINGTVAGSCAAIETLVDFITAEPAFQMPEIKYSWASKMPFHRMKVRLKKEIVTMGVDGVNPLKAVGTYVDPKDWNALIQDEETLLIDTRNDYEYAIGSFQGAVDPRIKTFREFPAWVLKHEADLKKKKKIAMFCTGGIRCEKSTAYVRELGYEQVYHLKGGILKYLETIPKEDSLWWGECFVFDERVSVKHGLEECGRELCRACRSPLNTESKLSPHYEEGVSCDACYNTRSEDDRERFRERHRQFQLSKLRAMHSHQE</sequence>
<organism>
    <name type="scientific">Bartonella henselae (strain ATCC 49882 / DSM 28221 / CCUG 30454 / Houston 1)</name>
    <name type="common">Rochalimaea henselae</name>
    <dbReference type="NCBI Taxonomy" id="283166"/>
    <lineage>
        <taxon>Bacteria</taxon>
        <taxon>Pseudomonadati</taxon>
        <taxon>Pseudomonadota</taxon>
        <taxon>Alphaproteobacteria</taxon>
        <taxon>Hyphomicrobiales</taxon>
        <taxon>Bartonellaceae</taxon>
        <taxon>Bartonella</taxon>
    </lineage>
</organism>
<evidence type="ECO:0000255" key="1">
    <source>
        <dbReference type="HAMAP-Rule" id="MF_00469"/>
    </source>
</evidence>
<keyword id="KW-0560">Oxidoreductase</keyword>
<keyword id="KW-0819">tRNA processing</keyword>
<feature type="chain" id="PRO_0000161445" description="tRNA uridine(34) hydroxylase">
    <location>
        <begin position="1"/>
        <end position="304"/>
    </location>
</feature>
<feature type="domain" description="Rhodanese" evidence="1">
    <location>
        <begin position="124"/>
        <end position="219"/>
    </location>
</feature>
<feature type="active site" description="Cysteine persulfide intermediate" evidence="1">
    <location>
        <position position="179"/>
    </location>
</feature>
<gene>
    <name evidence="1" type="primary">trhO</name>
    <name type="ordered locus">BH12760</name>
</gene>
<protein>
    <recommendedName>
        <fullName evidence="1">tRNA uridine(34) hydroxylase</fullName>
        <ecNumber evidence="1">1.14.-.-</ecNumber>
    </recommendedName>
    <alternativeName>
        <fullName evidence="1">tRNA hydroxylation protein O</fullName>
    </alternativeName>
</protein>
<dbReference type="EC" id="1.14.-.-" evidence="1"/>
<dbReference type="EMBL" id="BX897699">
    <property type="protein sequence ID" value="CAF28050.1"/>
    <property type="molecule type" value="Genomic_DNA"/>
</dbReference>
<dbReference type="RefSeq" id="WP_011181092.1">
    <property type="nucleotide sequence ID" value="NZ_LRIJ02000001.1"/>
</dbReference>
<dbReference type="SMR" id="Q6G5N5"/>
<dbReference type="PaxDb" id="283166-BH12760"/>
<dbReference type="DNASU" id="2865465"/>
<dbReference type="EnsemblBacteria" id="CAF28050">
    <property type="protein sequence ID" value="CAF28050"/>
    <property type="gene ID" value="BH12760"/>
</dbReference>
<dbReference type="KEGG" id="bhe:BH12760"/>
<dbReference type="eggNOG" id="COG1054">
    <property type="taxonomic scope" value="Bacteria"/>
</dbReference>
<dbReference type="OrthoDB" id="9778326at2"/>
<dbReference type="Proteomes" id="UP000000421">
    <property type="component" value="Chromosome"/>
</dbReference>
<dbReference type="GO" id="GO:0016705">
    <property type="term" value="F:oxidoreductase activity, acting on paired donors, with incorporation or reduction of molecular oxygen"/>
    <property type="evidence" value="ECO:0007669"/>
    <property type="project" value="UniProtKB-UniRule"/>
</dbReference>
<dbReference type="GO" id="GO:0006400">
    <property type="term" value="P:tRNA modification"/>
    <property type="evidence" value="ECO:0007669"/>
    <property type="project" value="UniProtKB-UniRule"/>
</dbReference>
<dbReference type="CDD" id="cd01518">
    <property type="entry name" value="RHOD_YceA"/>
    <property type="match status" value="1"/>
</dbReference>
<dbReference type="Gene3D" id="3.30.70.100">
    <property type="match status" value="1"/>
</dbReference>
<dbReference type="Gene3D" id="3.40.250.10">
    <property type="entry name" value="Rhodanese-like domain"/>
    <property type="match status" value="1"/>
</dbReference>
<dbReference type="HAMAP" id="MF_00469">
    <property type="entry name" value="TrhO"/>
    <property type="match status" value="1"/>
</dbReference>
<dbReference type="InterPro" id="IPR001763">
    <property type="entry name" value="Rhodanese-like_dom"/>
</dbReference>
<dbReference type="InterPro" id="IPR036873">
    <property type="entry name" value="Rhodanese-like_dom_sf"/>
</dbReference>
<dbReference type="InterPro" id="IPR020936">
    <property type="entry name" value="TrhO"/>
</dbReference>
<dbReference type="InterPro" id="IPR040503">
    <property type="entry name" value="TRHO_N"/>
</dbReference>
<dbReference type="NCBIfam" id="NF001136">
    <property type="entry name" value="PRK00142.1-4"/>
    <property type="match status" value="1"/>
</dbReference>
<dbReference type="PANTHER" id="PTHR43268:SF3">
    <property type="entry name" value="RHODANESE-LIKE DOMAIN-CONTAINING PROTEIN 7-RELATED"/>
    <property type="match status" value="1"/>
</dbReference>
<dbReference type="PANTHER" id="PTHR43268">
    <property type="entry name" value="THIOSULFATE SULFURTRANSFERASE/RHODANESE-LIKE DOMAIN-CONTAINING PROTEIN 2"/>
    <property type="match status" value="1"/>
</dbReference>
<dbReference type="Pfam" id="PF00581">
    <property type="entry name" value="Rhodanese"/>
    <property type="match status" value="1"/>
</dbReference>
<dbReference type="Pfam" id="PF17773">
    <property type="entry name" value="UPF0176_N"/>
    <property type="match status" value="1"/>
</dbReference>
<dbReference type="SMART" id="SM00450">
    <property type="entry name" value="RHOD"/>
    <property type="match status" value="1"/>
</dbReference>
<dbReference type="SUPFAM" id="SSF52821">
    <property type="entry name" value="Rhodanese/Cell cycle control phosphatase"/>
    <property type="match status" value="1"/>
</dbReference>
<dbReference type="PROSITE" id="PS50206">
    <property type="entry name" value="RHODANESE_3"/>
    <property type="match status" value="1"/>
</dbReference>
<reference key="1">
    <citation type="journal article" date="2004" name="Proc. Natl. Acad. Sci. U.S.A.">
        <title>The louse-borne human pathogen Bartonella quintana is a genomic derivative of the zoonotic agent Bartonella henselae.</title>
        <authorList>
            <person name="Alsmark U.C.M."/>
            <person name="Frank A.C."/>
            <person name="Karlberg E.O."/>
            <person name="Legault B.-A."/>
            <person name="Ardell D.H."/>
            <person name="Canbaeck B."/>
            <person name="Eriksson A.-S."/>
            <person name="Naeslund A.K."/>
            <person name="Handley S.A."/>
            <person name="Huvet M."/>
            <person name="La Scola B."/>
            <person name="Holmberg M."/>
            <person name="Andersson S.G.E."/>
        </authorList>
    </citation>
    <scope>NUCLEOTIDE SEQUENCE [LARGE SCALE GENOMIC DNA]</scope>
    <source>
        <strain>ATCC 49882 / DSM 28221 / CCUG 30454 / Houston 1</strain>
    </source>
</reference>